<evidence type="ECO:0000250" key="1"/>
<evidence type="ECO:0000305" key="2"/>
<accession>A6TU88</accession>
<proteinExistence type="inferred from homology"/>
<protein>
    <recommendedName>
        <fullName>8-amino-7-oxononanoate synthase</fullName>
        <shortName>AONS</shortName>
        <ecNumber>2.3.1.47</ecNumber>
    </recommendedName>
    <alternativeName>
        <fullName>7-keto-8-amino-pelargonic acid synthase</fullName>
        <shortName>7-KAP synthase</shortName>
        <shortName>KAPA synthase</shortName>
    </alternativeName>
    <alternativeName>
        <fullName>8-amino-7-ketopelargonate synthase</fullName>
    </alternativeName>
    <alternativeName>
        <fullName>Alpha-oxoamine synthase</fullName>
    </alternativeName>
</protein>
<gene>
    <name type="ordered locus">Amet_3634</name>
</gene>
<feature type="chain" id="PRO_0000380892" description="8-amino-7-oxononanoate synthase">
    <location>
        <begin position="1"/>
        <end position="395"/>
    </location>
</feature>
<feature type="binding site" evidence="1">
    <location>
        <position position="24"/>
    </location>
    <ligand>
        <name>substrate</name>
    </ligand>
</feature>
<feature type="binding site" evidence="1">
    <location>
        <begin position="111"/>
        <end position="112"/>
    </location>
    <ligand>
        <name>pyridoxal 5'-phosphate</name>
        <dbReference type="ChEBI" id="CHEBI:597326"/>
    </ligand>
</feature>
<feature type="binding site" evidence="1">
    <location>
        <position position="136"/>
    </location>
    <ligand>
        <name>substrate</name>
    </ligand>
</feature>
<feature type="binding site" evidence="1">
    <location>
        <position position="184"/>
    </location>
    <ligand>
        <name>pyridoxal 5'-phosphate</name>
        <dbReference type="ChEBI" id="CHEBI:597326"/>
    </ligand>
</feature>
<feature type="binding site" evidence="1">
    <location>
        <begin position="209"/>
        <end position="212"/>
    </location>
    <ligand>
        <name>pyridoxal 5'-phosphate</name>
        <dbReference type="ChEBI" id="CHEBI:597326"/>
    </ligand>
</feature>
<feature type="binding site" evidence="1">
    <location>
        <begin position="240"/>
        <end position="243"/>
    </location>
    <ligand>
        <name>pyridoxal 5'-phosphate</name>
        <dbReference type="ChEBI" id="CHEBI:597326"/>
    </ligand>
</feature>
<feature type="binding site" evidence="1">
    <location>
        <position position="357"/>
    </location>
    <ligand>
        <name>substrate</name>
    </ligand>
</feature>
<feature type="modified residue" description="N6-(pyridoxal phosphate)lysine" evidence="1">
    <location>
        <position position="243"/>
    </location>
</feature>
<sequence>MNNVHELQFLKEKIQELKNDGVYRKLPILEGPNEAEIMLNGKKVINLSSNNYLGFANHPQIKKAAIDAVEKYGVGAGAVRTIVGNMDIHEELERVLAEFKREEAVMVFQSGFNCNAGTIQAVTEKGDLIISDQLNHASIIDGARLSRADKTVFKHADMDNLEQVLKENQDKYRNKLIITDGVFSMDGDIAPLPDIVELAEKYGAMTYVDDAHGSGVLGENGRGTVDHFGLHGRVDFTIGTLSKAIGVIGGYVAGSHTMKEWLSHRGRPLLFSTSLPPAAVGSIIEAVKLLMSTTEYTDRLWDNAKYFKEKISQLGFDIGHSGTPITPVIIGEEGKAMAFSKKLLENGVFVSGIIFPTVAKGTGRVRCMVTAGHTKEQLDRAVEVFKKVGQEMDLL</sequence>
<dbReference type="EC" id="2.3.1.47"/>
<dbReference type="EMBL" id="CP000724">
    <property type="protein sequence ID" value="ABR49756.1"/>
    <property type="molecule type" value="Genomic_DNA"/>
</dbReference>
<dbReference type="RefSeq" id="WP_012064716.1">
    <property type="nucleotide sequence ID" value="NC_009633.1"/>
</dbReference>
<dbReference type="SMR" id="A6TU88"/>
<dbReference type="STRING" id="293826.Amet_3634"/>
<dbReference type="KEGG" id="amt:Amet_3634"/>
<dbReference type="eggNOG" id="COG0156">
    <property type="taxonomic scope" value="Bacteria"/>
</dbReference>
<dbReference type="HOGENOM" id="CLU_015846_11_0_9"/>
<dbReference type="OrthoDB" id="9807157at2"/>
<dbReference type="UniPathway" id="UPA00078"/>
<dbReference type="Proteomes" id="UP000001572">
    <property type="component" value="Chromosome"/>
</dbReference>
<dbReference type="GO" id="GO:0008710">
    <property type="term" value="F:8-amino-7-oxononanoate synthase activity"/>
    <property type="evidence" value="ECO:0000250"/>
    <property type="project" value="UniProtKB"/>
</dbReference>
<dbReference type="GO" id="GO:0008890">
    <property type="term" value="F:glycine C-acetyltransferase activity"/>
    <property type="evidence" value="ECO:0000250"/>
    <property type="project" value="UniProtKB"/>
</dbReference>
<dbReference type="GO" id="GO:0030170">
    <property type="term" value="F:pyridoxal phosphate binding"/>
    <property type="evidence" value="ECO:0000250"/>
    <property type="project" value="UniProtKB"/>
</dbReference>
<dbReference type="GO" id="GO:0009102">
    <property type="term" value="P:biotin biosynthetic process"/>
    <property type="evidence" value="ECO:0000250"/>
    <property type="project" value="UniProtKB"/>
</dbReference>
<dbReference type="CDD" id="cd06454">
    <property type="entry name" value="KBL_like"/>
    <property type="match status" value="1"/>
</dbReference>
<dbReference type="FunFam" id="3.40.640.10:FF:000006">
    <property type="entry name" value="5-aminolevulinate synthase, mitochondrial"/>
    <property type="match status" value="1"/>
</dbReference>
<dbReference type="Gene3D" id="3.90.1150.10">
    <property type="entry name" value="Aspartate Aminotransferase, domain 1"/>
    <property type="match status" value="1"/>
</dbReference>
<dbReference type="Gene3D" id="3.40.640.10">
    <property type="entry name" value="Type I PLP-dependent aspartate aminotransferase-like (Major domain)"/>
    <property type="match status" value="1"/>
</dbReference>
<dbReference type="InterPro" id="IPR001917">
    <property type="entry name" value="Aminotrans_II_pyridoxalP_BS"/>
</dbReference>
<dbReference type="InterPro" id="IPR004839">
    <property type="entry name" value="Aminotransferase_I/II_large"/>
</dbReference>
<dbReference type="InterPro" id="IPR050087">
    <property type="entry name" value="AON_synthase_class-II"/>
</dbReference>
<dbReference type="InterPro" id="IPR010962">
    <property type="entry name" value="AONS_Archaea/Firmicutes"/>
</dbReference>
<dbReference type="InterPro" id="IPR004723">
    <property type="entry name" value="AONS_Archaea/Proteobacteria"/>
</dbReference>
<dbReference type="InterPro" id="IPR015424">
    <property type="entry name" value="PyrdxlP-dep_Trfase"/>
</dbReference>
<dbReference type="InterPro" id="IPR015421">
    <property type="entry name" value="PyrdxlP-dep_Trfase_major"/>
</dbReference>
<dbReference type="InterPro" id="IPR015422">
    <property type="entry name" value="PyrdxlP-dep_Trfase_small"/>
</dbReference>
<dbReference type="NCBIfam" id="TIGR00858">
    <property type="entry name" value="bioF"/>
    <property type="match status" value="1"/>
</dbReference>
<dbReference type="NCBIfam" id="TIGR01825">
    <property type="entry name" value="gly_Cac_T_rel"/>
    <property type="match status" value="1"/>
</dbReference>
<dbReference type="NCBIfam" id="NF005394">
    <property type="entry name" value="PRK06939.1"/>
    <property type="match status" value="1"/>
</dbReference>
<dbReference type="PANTHER" id="PTHR13693">
    <property type="entry name" value="CLASS II AMINOTRANSFERASE/8-AMINO-7-OXONONANOATE SYNTHASE"/>
    <property type="match status" value="1"/>
</dbReference>
<dbReference type="PANTHER" id="PTHR13693:SF3">
    <property type="entry name" value="LD36009P"/>
    <property type="match status" value="1"/>
</dbReference>
<dbReference type="Pfam" id="PF00155">
    <property type="entry name" value="Aminotran_1_2"/>
    <property type="match status" value="1"/>
</dbReference>
<dbReference type="SUPFAM" id="SSF53383">
    <property type="entry name" value="PLP-dependent transferases"/>
    <property type="match status" value="1"/>
</dbReference>
<dbReference type="PROSITE" id="PS00599">
    <property type="entry name" value="AA_TRANSFER_CLASS_2"/>
    <property type="match status" value="1"/>
</dbReference>
<comment type="function">
    <text evidence="1">Catalyzes the decarboxylative condensation of pimeloyl-[acyl-carrier protein] and L-alanine to produce 8-amino-7-oxononanoate (AON), [acyl-carrier protein], and carbon dioxide.</text>
</comment>
<comment type="catalytic activity">
    <reaction>
        <text>6-carboxyhexanoyl-[ACP] + L-alanine + H(+) = (8S)-8-amino-7-oxononanoate + holo-[ACP] + CO2</text>
        <dbReference type="Rhea" id="RHEA:42288"/>
        <dbReference type="Rhea" id="RHEA-COMP:9685"/>
        <dbReference type="Rhea" id="RHEA-COMP:9955"/>
        <dbReference type="ChEBI" id="CHEBI:15378"/>
        <dbReference type="ChEBI" id="CHEBI:16526"/>
        <dbReference type="ChEBI" id="CHEBI:57972"/>
        <dbReference type="ChEBI" id="CHEBI:64479"/>
        <dbReference type="ChEBI" id="CHEBI:78846"/>
        <dbReference type="ChEBI" id="CHEBI:149468"/>
        <dbReference type="EC" id="2.3.1.47"/>
    </reaction>
</comment>
<comment type="cofactor">
    <cofactor evidence="1">
        <name>pyridoxal 5'-phosphate</name>
        <dbReference type="ChEBI" id="CHEBI:597326"/>
    </cofactor>
</comment>
<comment type="pathway">
    <text>Cofactor biosynthesis; biotin biosynthesis.</text>
</comment>
<comment type="subunit">
    <text evidence="1">Homodimer.</text>
</comment>
<comment type="similarity">
    <text evidence="2">Belongs to the class-II pyridoxal-phosphate-dependent aminotransferase family. BioF subfamily.</text>
</comment>
<organism>
    <name type="scientific">Alkaliphilus metalliredigens (strain QYMF)</name>
    <dbReference type="NCBI Taxonomy" id="293826"/>
    <lineage>
        <taxon>Bacteria</taxon>
        <taxon>Bacillati</taxon>
        <taxon>Bacillota</taxon>
        <taxon>Clostridia</taxon>
        <taxon>Peptostreptococcales</taxon>
        <taxon>Natronincolaceae</taxon>
        <taxon>Alkaliphilus</taxon>
    </lineage>
</organism>
<reference key="1">
    <citation type="journal article" date="2016" name="Genome Announc.">
        <title>Complete genome sequence of Alkaliphilus metalliredigens strain QYMF, an alkaliphilic and metal-reducing bacterium isolated from borax-contaminated leachate ponds.</title>
        <authorList>
            <person name="Hwang C."/>
            <person name="Copeland A."/>
            <person name="Lucas S."/>
            <person name="Lapidus A."/>
            <person name="Barry K."/>
            <person name="Detter J.C."/>
            <person name="Glavina Del Rio T."/>
            <person name="Hammon N."/>
            <person name="Israni S."/>
            <person name="Dalin E."/>
            <person name="Tice H."/>
            <person name="Pitluck S."/>
            <person name="Chertkov O."/>
            <person name="Brettin T."/>
            <person name="Bruce D."/>
            <person name="Han C."/>
            <person name="Schmutz J."/>
            <person name="Larimer F."/>
            <person name="Land M.L."/>
            <person name="Hauser L."/>
            <person name="Kyrpides N."/>
            <person name="Mikhailova N."/>
            <person name="Ye Q."/>
            <person name="Zhou J."/>
            <person name="Richardson P."/>
            <person name="Fields M.W."/>
        </authorList>
    </citation>
    <scope>NUCLEOTIDE SEQUENCE [LARGE SCALE GENOMIC DNA]</scope>
    <source>
        <strain>QYMF</strain>
    </source>
</reference>
<name>BIOF_ALKMQ</name>
<keyword id="KW-0012">Acyltransferase</keyword>
<keyword id="KW-0093">Biotin biosynthesis</keyword>
<keyword id="KW-0663">Pyridoxal phosphate</keyword>
<keyword id="KW-1185">Reference proteome</keyword>
<keyword id="KW-0808">Transferase</keyword>